<evidence type="ECO:0000255" key="1">
    <source>
        <dbReference type="PROSITE-ProRule" id="PRU00765"/>
    </source>
</evidence>
<evidence type="ECO:0000256" key="2">
    <source>
        <dbReference type="SAM" id="MobiDB-lite"/>
    </source>
</evidence>
<evidence type="ECO:0000269" key="3">
    <source>
    </source>
</evidence>
<evidence type="ECO:0000269" key="4">
    <source>
    </source>
</evidence>
<evidence type="ECO:0000269" key="5">
    <source>
    </source>
</evidence>
<evidence type="ECO:0000269" key="6">
    <source>
    </source>
</evidence>
<evidence type="ECO:0000303" key="7">
    <source>
    </source>
</evidence>
<evidence type="ECO:0000303" key="8">
    <source>
    </source>
</evidence>
<evidence type="ECO:0000303" key="9">
    <source>
    </source>
</evidence>
<evidence type="ECO:0000305" key="10"/>
<evidence type="ECO:0000305" key="11">
    <source>
    </source>
</evidence>
<evidence type="ECO:0000305" key="12">
    <source>
    </source>
</evidence>
<evidence type="ECO:0000312" key="13">
    <source>
        <dbReference type="Araport" id="AT1G80680"/>
    </source>
</evidence>
<evidence type="ECO:0000312" key="14">
    <source>
        <dbReference type="EMBL" id="AAF14656.1"/>
    </source>
</evidence>
<evidence type="ECO:0007744" key="15">
    <source>
    </source>
</evidence>
<evidence type="ECO:0007744" key="16">
    <source>
    </source>
</evidence>
<feature type="chain" id="PRO_0000425594" description="Nuclear pore complex protein NUP96">
    <location>
        <begin position="1"/>
        <end position="1046"/>
    </location>
</feature>
<feature type="domain" description="Peptidase S59" evidence="1">
    <location>
        <begin position="51"/>
        <end position="187"/>
    </location>
</feature>
<feature type="region of interest" description="Disordered" evidence="2">
    <location>
        <begin position="283"/>
        <end position="304"/>
    </location>
</feature>
<feature type="compositionally biased region" description="Polar residues" evidence="2">
    <location>
        <begin position="283"/>
        <end position="295"/>
    </location>
</feature>
<feature type="modified residue" description="Phosphoserine" evidence="15 16">
    <location>
        <position position="523"/>
    </location>
</feature>
<feature type="sequence conflict" description="In Ref. 2; AAN03675." evidence="10" ref="2">
    <original>S</original>
    <variation>A</variation>
    <location>
        <position position="279"/>
    </location>
</feature>
<sequence>MTSLSIQPFPEISRMARDLDSRKKRRISLDGIAALCEHSKEIIDSLPMLNSPDYFLKPCINELVEREIESPDYCSRVPDFTIGRIGYGYIRFLGNTDVRRLDLDHIVKFHRHEVIVYDDESSKPVVGEGLNKAAEVTLVVNIPDLTWGKQQVNHIAYKLKQSTERQGATFISFDPDNGLWKFFVPHFSRFGLSDDEAEDIAMDDAPGLGDPVGLDGKKVADIDEEDQMETSELELSHSLPAHLGLDPEKMKEMRMLMFPNEDEDESEDFREQTSHLMTSLTKRNVRPSQKIAQRNSHQDPPPVVRKTPLALLEYNPGNDKSSPGSILMVQQNKNLAVRKSKTGGFELDISHVTPLTDNYSRNVVDAALFMGRSFRAGWGPNGVLFHTGKPICSSSSQMVLSSVINKEKIAIDKVVWDRKGKVQKELIDSAFEAPLSLHKELNHVEEEVRFGSFSLKLQNVVTDRVVLSDICRSYIGIIEKQLEVAGLSTSAKLFLMHQVMVWELIKVLFSERQSTERLMYAASDNEEDVMQDVKEDSAKIDTEALPLIRRAEFSCWLQESVSHRVQEDVSDLNGSSYLEHLFFLLTGRELDSAVELAISKGDVRLACLLSQAGGSTVNRNDILQQLHLWRRNGLDFNFIEKERIKLYELLAGNIHDALQDFTIDWKRFLGLLMWHHLPPDSSLPIIFRSYQLLLNQAKAPWPVPIYIDEGPADGFVSDNKHSDILYYLMLLHSKEEEEFGFLQTMFSAFSSTDDPLDYHMIWHHRGILEAVGAFTSDDLHTLDMGFVAQLLSQGLCHWAIYVVLHIPFREDHPYLHVTVIREILFQYCETWSSMESQRQFIKDLGIPSEWMHEALAVYYNYHGDFVKALDQFIECANWQRAHSIFMTSVAHSLFLSANHSEIWRIATSMDDRKSEIENWDLGAGIYMSFYLLKSSLQEDADTMVELEPLDSTNESCRNFVGRLNESLAVWGDRLPVEARVAYSKMAEEICDLLLSDLSKNPSRETQLTCFETAFDAPLPEDVRSTHLQDAVSLFSLYLSETGQISA</sequence>
<gene>
    <name evidence="9" type="primary">NUP96</name>
    <name evidence="7" type="synonym">MOS3</name>
    <name type="synonym">PRE</name>
    <name evidence="8" type="synonym">SAR3</name>
    <name evidence="13" type="ordered locus">At1g80680</name>
    <name evidence="14" type="ORF">F23A5.3</name>
</gene>
<keyword id="KW-0472">Membrane</keyword>
<keyword id="KW-0509">mRNA transport</keyword>
<keyword id="KW-0906">Nuclear pore complex</keyword>
<keyword id="KW-0539">Nucleus</keyword>
<keyword id="KW-0597">Phosphoprotein</keyword>
<keyword id="KW-0611">Plant defense</keyword>
<keyword id="KW-0653">Protein transport</keyword>
<keyword id="KW-1185">Reference proteome</keyword>
<keyword id="KW-0346">Stress response</keyword>
<keyword id="KW-0811">Translocation</keyword>
<keyword id="KW-0813">Transport</keyword>
<comment type="function">
    <text evidence="3 4 5 6">Contributes to the transfer of mature mRNA from the nucleus to the cytosol. Required for both R gene-mediated and basal disease resistance. RNA export seems to play a critical role in stress responses and regulation of plant growth and development.</text>
</comment>
<comment type="subunit">
    <text evidence="12">Part of the nuclear pore complex (NPC). The NPC has an eight-fold symmetrical structure comprising a central transport channel and two rings, the cytoplasmic and nuclear rings, to which eight filaments are attached. The cytoplasmic filaments have loose ends, while the nuclear filaments are joined in a distal ring, forming a nuclear basket. NPCs are highly dynamic in configuration and composition, and can be devided in 3 subcomplexes, the NUP62 subcomplex, the NUP107-160 subcomplex and the NUP93 subcomplex, containing approximately 30 different nucleoporin proteins.</text>
</comment>
<comment type="subcellular location">
    <subcellularLocation>
        <location evidence="4">Nucleus membrane</location>
        <topology evidence="4">Peripheral membrane protein</topology>
        <orientation evidence="4">Nucleoplasmic side</orientation>
    </subcellularLocation>
    <subcellularLocation>
        <location evidence="3 5">Nucleus</location>
        <location evidence="3 5">Nuclear pore complex</location>
    </subcellularLocation>
</comment>
<comment type="tissue specificity">
    <text evidence="4">Expressed in roots, leaves, stems, flowers and siliques.</text>
</comment>
<comment type="disruption phenotype">
    <text evidence="3 4 5 6">Pleiotropic phenotype with diverse growth defects and early flowering.</text>
</comment>
<comment type="miscellaneous">
    <text evidence="11">Unlike in mammals and yeast, NUP96 and NUP98 are not translated as a polyprotein.</text>
</comment>
<comment type="sequence caution" evidence="10">
    <conflict type="erroneous gene model prediction">
        <sequence resource="EMBL-CDS" id="AAA98914"/>
    </conflict>
</comment>
<comment type="sequence caution" evidence="10">
    <conflict type="erroneous gene model prediction">
        <sequence resource="EMBL-CDS" id="AAF14656"/>
    </conflict>
</comment>
<proteinExistence type="evidence at protein level"/>
<reference key="1">
    <citation type="journal article" date="2005" name="Plant Cell">
        <title>A putative nucleoporin 96 is required for both basal defense and constitutive resistance responses mediated by suppressor of npr1-1,constitutive 1.</title>
        <authorList>
            <person name="Zhang Y."/>
            <person name="Li X."/>
        </authorList>
    </citation>
    <scope>NUCLEOTIDE SEQUENCE [MRNA]</scope>
    <scope>FUNCTION</scope>
    <scope>SUBCELLULAR LOCATION</scope>
    <scope>DISRUPTION PHENOTYPE</scope>
    <source>
        <strain>cv. Columbia</strain>
    </source>
</reference>
<reference key="2">
    <citation type="submission" date="2001-08" db="EMBL/GenBank/DDBJ databases">
        <title>A mutation in PRECOZ (PRE) causes early flowering and suppresses late flowering mutant phenotypes in Arabidopsis.</title>
        <authorList>
            <person name="Alonso Blanco C."/>
            <person name="Martinez-Zapater J.M."/>
        </authorList>
    </citation>
    <scope>NUCLEOTIDE SEQUENCE [GENOMIC DNA / MRNA]</scope>
    <source>
        <strain>cv. Columbia</strain>
        <strain>cv. Landsberg erecta</strain>
    </source>
</reference>
<reference key="3">
    <citation type="submission" date="1996-04" db="EMBL/GenBank/DDBJ databases">
        <title>A 37.5 Kb sequence from Arabidopsis thaliana chromosome I.</title>
        <authorList>
            <person name="Goodman H.M."/>
            <person name="Gallant P."/>
            <person name="Keifer-Higgins S."/>
            <person name="Rubenfield M."/>
            <person name="Church G.M."/>
        </authorList>
    </citation>
    <scope>NUCLEOTIDE SEQUENCE [GENOMIC DNA]</scope>
    <source>
        <strain>cv. Columbia</strain>
    </source>
</reference>
<reference key="4">
    <citation type="journal article" date="2000" name="Nature">
        <title>Sequence and analysis of chromosome 1 of the plant Arabidopsis thaliana.</title>
        <authorList>
            <person name="Theologis A."/>
            <person name="Ecker J.R."/>
            <person name="Palm C.J."/>
            <person name="Federspiel N.A."/>
            <person name="Kaul S."/>
            <person name="White O."/>
            <person name="Alonso J."/>
            <person name="Altafi H."/>
            <person name="Araujo R."/>
            <person name="Bowman C.L."/>
            <person name="Brooks S.Y."/>
            <person name="Buehler E."/>
            <person name="Chan A."/>
            <person name="Chao Q."/>
            <person name="Chen H."/>
            <person name="Cheuk R.F."/>
            <person name="Chin C.W."/>
            <person name="Chung M.K."/>
            <person name="Conn L."/>
            <person name="Conway A.B."/>
            <person name="Conway A.R."/>
            <person name="Creasy T.H."/>
            <person name="Dewar K."/>
            <person name="Dunn P."/>
            <person name="Etgu P."/>
            <person name="Feldblyum T.V."/>
            <person name="Feng J.-D."/>
            <person name="Fong B."/>
            <person name="Fujii C.Y."/>
            <person name="Gill J.E."/>
            <person name="Goldsmith A.D."/>
            <person name="Haas B."/>
            <person name="Hansen N.F."/>
            <person name="Hughes B."/>
            <person name="Huizar L."/>
            <person name="Hunter J.L."/>
            <person name="Jenkins J."/>
            <person name="Johnson-Hopson C."/>
            <person name="Khan S."/>
            <person name="Khaykin E."/>
            <person name="Kim C.J."/>
            <person name="Koo H.L."/>
            <person name="Kremenetskaia I."/>
            <person name="Kurtz D.B."/>
            <person name="Kwan A."/>
            <person name="Lam B."/>
            <person name="Langin-Hooper S."/>
            <person name="Lee A."/>
            <person name="Lee J.M."/>
            <person name="Lenz C.A."/>
            <person name="Li J.H."/>
            <person name="Li Y.-P."/>
            <person name="Lin X."/>
            <person name="Liu S.X."/>
            <person name="Liu Z.A."/>
            <person name="Luros J.S."/>
            <person name="Maiti R."/>
            <person name="Marziali A."/>
            <person name="Militscher J."/>
            <person name="Miranda M."/>
            <person name="Nguyen M."/>
            <person name="Nierman W.C."/>
            <person name="Osborne B.I."/>
            <person name="Pai G."/>
            <person name="Peterson J."/>
            <person name="Pham P.K."/>
            <person name="Rizzo M."/>
            <person name="Rooney T."/>
            <person name="Rowley D."/>
            <person name="Sakano H."/>
            <person name="Salzberg S.L."/>
            <person name="Schwartz J.R."/>
            <person name="Shinn P."/>
            <person name="Southwick A.M."/>
            <person name="Sun H."/>
            <person name="Tallon L.J."/>
            <person name="Tambunga G."/>
            <person name="Toriumi M.J."/>
            <person name="Town C.D."/>
            <person name="Utterback T."/>
            <person name="Van Aken S."/>
            <person name="Vaysberg M."/>
            <person name="Vysotskaia V.S."/>
            <person name="Walker M."/>
            <person name="Wu D."/>
            <person name="Yu G."/>
            <person name="Fraser C.M."/>
            <person name="Venter J.C."/>
            <person name="Davis R.W."/>
        </authorList>
    </citation>
    <scope>NUCLEOTIDE SEQUENCE [LARGE SCALE GENOMIC DNA]</scope>
    <source>
        <strain>cv. Columbia</strain>
    </source>
</reference>
<reference key="5">
    <citation type="journal article" date="2017" name="Plant J.">
        <title>Araport11: a complete reannotation of the Arabidopsis thaliana reference genome.</title>
        <authorList>
            <person name="Cheng C.Y."/>
            <person name="Krishnakumar V."/>
            <person name="Chan A.P."/>
            <person name="Thibaud-Nissen F."/>
            <person name="Schobel S."/>
            <person name="Town C.D."/>
        </authorList>
    </citation>
    <scope>GENOME REANNOTATION</scope>
    <source>
        <strain>cv. Columbia</strain>
    </source>
</reference>
<reference key="6">
    <citation type="journal article" date="2006" name="Plant Cell">
        <title>The Arabidopsis SUPPRESSOR OF AUXIN RESISTANCE proteins are nucleoporins with an important role in hormone signaling and development.</title>
        <authorList>
            <person name="Parry G."/>
            <person name="Ward S."/>
            <person name="Cernac A."/>
            <person name="Dharmasiri S."/>
            <person name="Estelle M."/>
        </authorList>
    </citation>
    <scope>FUNCTION</scope>
    <scope>SUBCELLULAR LOCATION</scope>
    <scope>TISSUE SPECIFICITY</scope>
    <scope>DISRUPTION PHENOTYPE</scope>
</reference>
<reference key="7">
    <citation type="journal article" date="2009" name="J. Proteomics">
        <title>Phosphoproteomic analysis of nuclei-enriched fractions from Arabidopsis thaliana.</title>
        <authorList>
            <person name="Jones A.M.E."/>
            <person name="MacLean D."/>
            <person name="Studholme D.J."/>
            <person name="Serna-Sanz A."/>
            <person name="Andreasson E."/>
            <person name="Rathjen J.P."/>
            <person name="Peck S.C."/>
        </authorList>
    </citation>
    <scope>PHOSPHORYLATION [LARGE SCALE ANALYSIS] AT SER-523</scope>
    <scope>IDENTIFICATION BY MASS SPECTROMETRY [LARGE SCALE ANALYSIS]</scope>
    <source>
        <strain>cv. Columbia</strain>
    </source>
</reference>
<reference key="8">
    <citation type="journal article" date="2009" name="Plant Physiol.">
        <title>Large-scale Arabidopsis phosphoproteome profiling reveals novel chloroplast kinase substrates and phosphorylation networks.</title>
        <authorList>
            <person name="Reiland S."/>
            <person name="Messerli G."/>
            <person name="Baerenfaller K."/>
            <person name="Gerrits B."/>
            <person name="Endler A."/>
            <person name="Grossmann J."/>
            <person name="Gruissem W."/>
            <person name="Baginsky S."/>
        </authorList>
    </citation>
    <scope>PHOSPHORYLATION [LARGE SCALE ANALYSIS] AT SER-523</scope>
    <scope>IDENTIFICATION BY MASS SPECTROMETRY [LARGE SCALE ANALYSIS]</scope>
</reference>
<reference key="9">
    <citation type="journal article" date="2010" name="Plant Cell">
        <title>Identification and characterization of nuclear pore complex components in Arabidopsis thaliana.</title>
        <authorList>
            <person name="Tamura K."/>
            <person name="Fukao Y."/>
            <person name="Iwamoto M."/>
            <person name="Haraguchi T."/>
            <person name="Hara-Nishimura I."/>
        </authorList>
    </citation>
    <scope>IDENTIFICATION IN THE NUCLEAR PORE COMPLEX</scope>
    <scope>NOMENCLATURE</scope>
</reference>
<reference key="10">
    <citation type="journal article" date="2010" name="PLoS Genet.">
        <title>MOS11: a new component in the mRNA export pathway.</title>
        <authorList>
            <person name="Germain H."/>
            <person name="Qu N."/>
            <person name="Cheng Y.T."/>
            <person name="Lee E."/>
            <person name="Huang Y."/>
            <person name="Dong O.X."/>
            <person name="Gannon P."/>
            <person name="Huang S."/>
            <person name="Ding P."/>
            <person name="Li Y."/>
            <person name="Sack F."/>
            <person name="Zhang Y."/>
            <person name="Li X."/>
        </authorList>
    </citation>
    <scope>FUNCTION</scope>
    <scope>SUBCELLULAR LOCATION</scope>
    <scope>DISRUPTION PHENOTYPE</scope>
</reference>
<reference key="11">
    <citation type="journal article" date="2012" name="Plant J.">
        <title>Putative members of the Arabidopsis Nup107-160 nuclear pore sub-complex contribute to pathogen defense.</title>
        <authorList>
            <person name="Wiermer M."/>
            <person name="Cheng Y.T."/>
            <person name="Imkampe J."/>
            <person name="Li M."/>
            <person name="Wang D."/>
            <person name="Lipka V."/>
            <person name="Li X."/>
        </authorList>
    </citation>
    <scope>FUNCTION</scope>
    <scope>DISRUPTION PHENOTYPE</scope>
</reference>
<dbReference type="EMBL" id="AY942798">
    <property type="protein sequence ID" value="AAX44044.1"/>
    <property type="molecule type" value="mRNA"/>
</dbReference>
<dbReference type="EMBL" id="AF411838">
    <property type="protein sequence ID" value="AAN03675.1"/>
    <property type="molecule type" value="Genomic_DNA"/>
</dbReference>
<dbReference type="EMBL" id="AF411839">
    <property type="protein sequence ID" value="AAN03676.1"/>
    <property type="molecule type" value="mRNA"/>
</dbReference>
<dbReference type="EMBL" id="U53501">
    <property type="protein sequence ID" value="AAA98914.1"/>
    <property type="status" value="ALT_SEQ"/>
    <property type="molecule type" value="Genomic_DNA"/>
</dbReference>
<dbReference type="EMBL" id="AC011713">
    <property type="protein sequence ID" value="AAF14656.1"/>
    <property type="status" value="ALT_SEQ"/>
    <property type="molecule type" value="Genomic_DNA"/>
</dbReference>
<dbReference type="EMBL" id="CP002684">
    <property type="protein sequence ID" value="AEE36436.1"/>
    <property type="molecule type" value="Genomic_DNA"/>
</dbReference>
<dbReference type="PIR" id="B96839">
    <property type="entry name" value="B96839"/>
</dbReference>
<dbReference type="RefSeq" id="NP_178183.2">
    <property type="nucleotide sequence ID" value="NM_106716.4"/>
</dbReference>
<dbReference type="SMR" id="Q8LLD0"/>
<dbReference type="FunCoup" id="Q8LLD0">
    <property type="interactions" value="4526"/>
</dbReference>
<dbReference type="STRING" id="3702.Q8LLD0"/>
<dbReference type="MEROPS" id="S59.A01"/>
<dbReference type="iPTMnet" id="Q8LLD0"/>
<dbReference type="PaxDb" id="3702-AT1G80680.1"/>
<dbReference type="ProteomicsDB" id="249356"/>
<dbReference type="EnsemblPlants" id="AT1G80680.1">
    <property type="protein sequence ID" value="AT1G80680.1"/>
    <property type="gene ID" value="AT1G80680"/>
</dbReference>
<dbReference type="GeneID" id="844407"/>
<dbReference type="Gramene" id="AT1G80680.1">
    <property type="protein sequence ID" value="AT1G80680.1"/>
    <property type="gene ID" value="AT1G80680"/>
</dbReference>
<dbReference type="KEGG" id="ath:AT1G80680"/>
<dbReference type="Araport" id="AT1G80680"/>
<dbReference type="TAIR" id="AT1G80680">
    <property type="gene designation" value="SAR3"/>
</dbReference>
<dbReference type="eggNOG" id="KOG0845">
    <property type="taxonomic scope" value="Eukaryota"/>
</dbReference>
<dbReference type="HOGENOM" id="CLU_012427_0_0_1"/>
<dbReference type="InParanoid" id="Q8LLD0"/>
<dbReference type="OMA" id="RWKFEVD"/>
<dbReference type="PhylomeDB" id="Q8LLD0"/>
<dbReference type="PRO" id="PR:Q8LLD0"/>
<dbReference type="Proteomes" id="UP000006548">
    <property type="component" value="Chromosome 1"/>
</dbReference>
<dbReference type="ExpressionAtlas" id="Q8LLD0">
    <property type="expression patterns" value="baseline and differential"/>
</dbReference>
<dbReference type="GO" id="GO:0005635">
    <property type="term" value="C:nuclear envelope"/>
    <property type="evidence" value="ECO:0000314"/>
    <property type="project" value="TAIR"/>
</dbReference>
<dbReference type="GO" id="GO:0031965">
    <property type="term" value="C:nuclear membrane"/>
    <property type="evidence" value="ECO:0000314"/>
    <property type="project" value="TAIR"/>
</dbReference>
<dbReference type="GO" id="GO:0005643">
    <property type="term" value="C:nuclear pore"/>
    <property type="evidence" value="ECO:0000314"/>
    <property type="project" value="TAIR"/>
</dbReference>
<dbReference type="GO" id="GO:0005634">
    <property type="term" value="C:nucleus"/>
    <property type="evidence" value="ECO:0000314"/>
    <property type="project" value="TAIR"/>
</dbReference>
<dbReference type="GO" id="GO:0015288">
    <property type="term" value="F:porin activity"/>
    <property type="evidence" value="ECO:0000250"/>
    <property type="project" value="TAIR"/>
</dbReference>
<dbReference type="GO" id="GO:0017056">
    <property type="term" value="F:structural constituent of nuclear pore"/>
    <property type="evidence" value="ECO:0000353"/>
    <property type="project" value="TAIR"/>
</dbReference>
<dbReference type="GO" id="GO:0006952">
    <property type="term" value="P:defense response"/>
    <property type="evidence" value="ECO:0007669"/>
    <property type="project" value="UniProtKB-KW"/>
</dbReference>
<dbReference type="GO" id="GO:0002758">
    <property type="term" value="P:innate immune response-activating signaling pathway"/>
    <property type="evidence" value="ECO:0000315"/>
    <property type="project" value="TAIR"/>
</dbReference>
<dbReference type="GO" id="GO:0048574">
    <property type="term" value="P:long-day photoperiodism, flowering"/>
    <property type="evidence" value="ECO:0000270"/>
    <property type="project" value="TAIR"/>
</dbReference>
<dbReference type="GO" id="GO:0051028">
    <property type="term" value="P:mRNA transport"/>
    <property type="evidence" value="ECO:0007669"/>
    <property type="project" value="UniProtKB-KW"/>
</dbReference>
<dbReference type="GO" id="GO:0015031">
    <property type="term" value="P:protein transport"/>
    <property type="evidence" value="ECO:0007669"/>
    <property type="project" value="UniProtKB-KW"/>
</dbReference>
<dbReference type="GO" id="GO:0009733">
    <property type="term" value="P:response to auxin"/>
    <property type="evidence" value="ECO:0000316"/>
    <property type="project" value="UniProtKB"/>
</dbReference>
<dbReference type="FunFam" id="1.25.40.690:FF:000002">
    <property type="entry name" value="Nuclear pore complex protein NUP96"/>
    <property type="match status" value="1"/>
</dbReference>
<dbReference type="FunFam" id="3.30.1610.10:FF:000002">
    <property type="entry name" value="nuclear pore complex protein NUP98A"/>
    <property type="match status" value="1"/>
</dbReference>
<dbReference type="Gene3D" id="1.25.40.690">
    <property type="match status" value="1"/>
</dbReference>
<dbReference type="Gene3D" id="3.30.1610.10">
    <property type="entry name" value="Peptidase S59, nucleoporin"/>
    <property type="match status" value="1"/>
</dbReference>
<dbReference type="InterPro" id="IPR037665">
    <property type="entry name" value="Nucleoporin_S59-like"/>
</dbReference>
<dbReference type="InterPro" id="IPR007230">
    <property type="entry name" value="Nup98_auto-Pept-S59_dom"/>
</dbReference>
<dbReference type="InterPro" id="IPR036903">
    <property type="entry name" value="Nup98_auto-Pept-S59_dom_sf"/>
</dbReference>
<dbReference type="InterPro" id="IPR021967">
    <property type="entry name" value="Nup98_C"/>
</dbReference>
<dbReference type="PANTHER" id="PTHR23198:SF26">
    <property type="entry name" value="NUCLEAR PORE COMPLEX PROTEIN NUP96"/>
    <property type="match status" value="1"/>
</dbReference>
<dbReference type="PANTHER" id="PTHR23198">
    <property type="entry name" value="NUCLEOPORIN"/>
    <property type="match status" value="1"/>
</dbReference>
<dbReference type="Pfam" id="PF04096">
    <property type="entry name" value="Nucleoporin2"/>
    <property type="match status" value="1"/>
</dbReference>
<dbReference type="Pfam" id="PF12110">
    <property type="entry name" value="Nup96"/>
    <property type="match status" value="1"/>
</dbReference>
<dbReference type="SUPFAM" id="SSF82215">
    <property type="entry name" value="C-terminal autoproteolytic domain of nucleoporin nup98"/>
    <property type="match status" value="1"/>
</dbReference>
<dbReference type="PROSITE" id="PS51434">
    <property type="entry name" value="NUP_C"/>
    <property type="match status" value="1"/>
</dbReference>
<accession>Q8LLD0</accession>
<accession>Q38941</accession>
<accession>Q8LLD1</accession>
<protein>
    <recommendedName>
        <fullName evidence="9">Nuclear pore complex protein NUP96</fullName>
        <shortName>AtNUP96</shortName>
    </recommendedName>
    <alternativeName>
        <fullName evidence="9">Nucleoporin 96</fullName>
    </alternativeName>
    <alternativeName>
        <fullName>Nucleoporin PRECOCIOUS</fullName>
    </alternativeName>
    <alternativeName>
        <fullName>Nucleoporin PRECOZ</fullName>
    </alternativeName>
    <alternativeName>
        <fullName evidence="7">Protein MODIFIER OF SNC1 3</fullName>
    </alternativeName>
    <alternativeName>
        <fullName evidence="8">Protein SUPPRESSOR OF AUXIN RESISTANCE 3</fullName>
    </alternativeName>
</protein>
<organism>
    <name type="scientific">Arabidopsis thaliana</name>
    <name type="common">Mouse-ear cress</name>
    <dbReference type="NCBI Taxonomy" id="3702"/>
    <lineage>
        <taxon>Eukaryota</taxon>
        <taxon>Viridiplantae</taxon>
        <taxon>Streptophyta</taxon>
        <taxon>Embryophyta</taxon>
        <taxon>Tracheophyta</taxon>
        <taxon>Spermatophyta</taxon>
        <taxon>Magnoliopsida</taxon>
        <taxon>eudicotyledons</taxon>
        <taxon>Gunneridae</taxon>
        <taxon>Pentapetalae</taxon>
        <taxon>rosids</taxon>
        <taxon>malvids</taxon>
        <taxon>Brassicales</taxon>
        <taxon>Brassicaceae</taxon>
        <taxon>Camelineae</taxon>
        <taxon>Arabidopsis</taxon>
    </lineage>
</organism>
<name>NUP96_ARATH</name>